<protein>
    <recommendedName>
        <fullName evidence="1">Large ribosomal subunit protein uL11</fullName>
    </recommendedName>
    <alternativeName>
        <fullName evidence="2">50S ribosomal protein L11</fullName>
    </alternativeName>
</protein>
<gene>
    <name evidence="1" type="primary">rplK</name>
    <name type="ordered locus">SPN23F05690</name>
</gene>
<proteinExistence type="inferred from homology"/>
<feature type="chain" id="PRO_1000195723" description="Large ribosomal subunit protein uL11">
    <location>
        <begin position="1"/>
        <end position="141"/>
    </location>
</feature>
<dbReference type="EMBL" id="FM211187">
    <property type="protein sequence ID" value="CAR68419.1"/>
    <property type="molecule type" value="Genomic_DNA"/>
</dbReference>
<dbReference type="RefSeq" id="WP_001085809.1">
    <property type="nucleotide sequence ID" value="NC_011900.1"/>
</dbReference>
<dbReference type="SMR" id="B8ZML8"/>
<dbReference type="GeneID" id="93739230"/>
<dbReference type="KEGG" id="sne:SPN23F05690"/>
<dbReference type="HOGENOM" id="CLU_074237_2_1_9"/>
<dbReference type="GO" id="GO:0022625">
    <property type="term" value="C:cytosolic large ribosomal subunit"/>
    <property type="evidence" value="ECO:0007669"/>
    <property type="project" value="TreeGrafter"/>
</dbReference>
<dbReference type="GO" id="GO:0070180">
    <property type="term" value="F:large ribosomal subunit rRNA binding"/>
    <property type="evidence" value="ECO:0007669"/>
    <property type="project" value="UniProtKB-UniRule"/>
</dbReference>
<dbReference type="GO" id="GO:0003735">
    <property type="term" value="F:structural constituent of ribosome"/>
    <property type="evidence" value="ECO:0007669"/>
    <property type="project" value="InterPro"/>
</dbReference>
<dbReference type="GO" id="GO:0006412">
    <property type="term" value="P:translation"/>
    <property type="evidence" value="ECO:0007669"/>
    <property type="project" value="UniProtKB-UniRule"/>
</dbReference>
<dbReference type="CDD" id="cd00349">
    <property type="entry name" value="Ribosomal_L11"/>
    <property type="match status" value="1"/>
</dbReference>
<dbReference type="FunFam" id="1.10.10.250:FF:000001">
    <property type="entry name" value="50S ribosomal protein L11"/>
    <property type="match status" value="1"/>
</dbReference>
<dbReference type="FunFam" id="3.30.1550.10:FF:000001">
    <property type="entry name" value="50S ribosomal protein L11"/>
    <property type="match status" value="1"/>
</dbReference>
<dbReference type="Gene3D" id="1.10.10.250">
    <property type="entry name" value="Ribosomal protein L11, C-terminal domain"/>
    <property type="match status" value="1"/>
</dbReference>
<dbReference type="Gene3D" id="3.30.1550.10">
    <property type="entry name" value="Ribosomal protein L11/L12, N-terminal domain"/>
    <property type="match status" value="1"/>
</dbReference>
<dbReference type="HAMAP" id="MF_00736">
    <property type="entry name" value="Ribosomal_uL11"/>
    <property type="match status" value="1"/>
</dbReference>
<dbReference type="InterPro" id="IPR000911">
    <property type="entry name" value="Ribosomal_uL11"/>
</dbReference>
<dbReference type="InterPro" id="IPR006519">
    <property type="entry name" value="Ribosomal_uL11_bac-typ"/>
</dbReference>
<dbReference type="InterPro" id="IPR020783">
    <property type="entry name" value="Ribosomal_uL11_C"/>
</dbReference>
<dbReference type="InterPro" id="IPR036769">
    <property type="entry name" value="Ribosomal_uL11_C_sf"/>
</dbReference>
<dbReference type="InterPro" id="IPR020785">
    <property type="entry name" value="Ribosomal_uL11_CS"/>
</dbReference>
<dbReference type="InterPro" id="IPR020784">
    <property type="entry name" value="Ribosomal_uL11_N"/>
</dbReference>
<dbReference type="InterPro" id="IPR036796">
    <property type="entry name" value="Ribosomal_uL11_N_sf"/>
</dbReference>
<dbReference type="NCBIfam" id="TIGR01632">
    <property type="entry name" value="L11_bact"/>
    <property type="match status" value="1"/>
</dbReference>
<dbReference type="PANTHER" id="PTHR11661">
    <property type="entry name" value="60S RIBOSOMAL PROTEIN L12"/>
    <property type="match status" value="1"/>
</dbReference>
<dbReference type="PANTHER" id="PTHR11661:SF1">
    <property type="entry name" value="LARGE RIBOSOMAL SUBUNIT PROTEIN UL11M"/>
    <property type="match status" value="1"/>
</dbReference>
<dbReference type="Pfam" id="PF00298">
    <property type="entry name" value="Ribosomal_L11"/>
    <property type="match status" value="1"/>
</dbReference>
<dbReference type="Pfam" id="PF03946">
    <property type="entry name" value="Ribosomal_L11_N"/>
    <property type="match status" value="1"/>
</dbReference>
<dbReference type="SMART" id="SM00649">
    <property type="entry name" value="RL11"/>
    <property type="match status" value="1"/>
</dbReference>
<dbReference type="SUPFAM" id="SSF54747">
    <property type="entry name" value="Ribosomal L11/L12e N-terminal domain"/>
    <property type="match status" value="1"/>
</dbReference>
<dbReference type="SUPFAM" id="SSF46906">
    <property type="entry name" value="Ribosomal protein L11, C-terminal domain"/>
    <property type="match status" value="1"/>
</dbReference>
<dbReference type="PROSITE" id="PS00359">
    <property type="entry name" value="RIBOSOMAL_L11"/>
    <property type="match status" value="1"/>
</dbReference>
<sequence length="141" mass="14800">MAKKVEKLVKLQIPAGKATPAPPVGPALGQAGINIMGFTKEFNARTADQAGMIIPVVISVYEDKSFTFVTKTPPAAVLLKKAAGVEKGSGTPNKTKVATVTRAQVQEIAETKMPDLNAANVESAMRMIEGTARSMGFTVVD</sequence>
<comment type="function">
    <text evidence="1">Forms part of the ribosomal stalk which helps the ribosome interact with GTP-bound translation factors.</text>
</comment>
<comment type="subunit">
    <text evidence="1">Part of the ribosomal stalk of the 50S ribosomal subunit. Interacts with L10 and the large rRNA to form the base of the stalk. L10 forms an elongated spine to which L12 dimers bind in a sequential fashion forming a multimeric L10(L12)X complex.</text>
</comment>
<comment type="PTM">
    <text evidence="1">One or more lysine residues are methylated.</text>
</comment>
<comment type="similarity">
    <text evidence="1">Belongs to the universal ribosomal protein uL11 family.</text>
</comment>
<reference key="1">
    <citation type="journal article" date="2009" name="J. Bacteriol.">
        <title>Role of conjugative elements in the evolution of the multidrug-resistant pandemic clone Streptococcus pneumoniae Spain23F ST81.</title>
        <authorList>
            <person name="Croucher N.J."/>
            <person name="Walker D."/>
            <person name="Romero P."/>
            <person name="Lennard N."/>
            <person name="Paterson G.K."/>
            <person name="Bason N.C."/>
            <person name="Mitchell A.M."/>
            <person name="Quail M.A."/>
            <person name="Andrew P.W."/>
            <person name="Parkhill J."/>
            <person name="Bentley S.D."/>
            <person name="Mitchell T.J."/>
        </authorList>
    </citation>
    <scope>NUCLEOTIDE SEQUENCE [LARGE SCALE GENOMIC DNA]</scope>
    <source>
        <strain>ATCC 700669 / Spain 23F-1</strain>
    </source>
</reference>
<organism>
    <name type="scientific">Streptococcus pneumoniae (strain ATCC 700669 / Spain 23F-1)</name>
    <dbReference type="NCBI Taxonomy" id="561276"/>
    <lineage>
        <taxon>Bacteria</taxon>
        <taxon>Bacillati</taxon>
        <taxon>Bacillota</taxon>
        <taxon>Bacilli</taxon>
        <taxon>Lactobacillales</taxon>
        <taxon>Streptococcaceae</taxon>
        <taxon>Streptococcus</taxon>
    </lineage>
</organism>
<accession>B8ZML8</accession>
<keyword id="KW-0488">Methylation</keyword>
<keyword id="KW-0687">Ribonucleoprotein</keyword>
<keyword id="KW-0689">Ribosomal protein</keyword>
<keyword id="KW-0694">RNA-binding</keyword>
<keyword id="KW-0699">rRNA-binding</keyword>
<evidence type="ECO:0000255" key="1">
    <source>
        <dbReference type="HAMAP-Rule" id="MF_00736"/>
    </source>
</evidence>
<evidence type="ECO:0000305" key="2"/>
<name>RL11_STRPJ</name>